<gene>
    <name type="primary">serC</name>
    <name type="synonym">pdxC</name>
    <name type="synonym">pdxF</name>
    <name type="ordered locus">b0907</name>
    <name type="ordered locus">JW0890</name>
</gene>
<sequence length="362" mass="39783">MAQIFNFSSGPAMLPAEVLKQAQQELRDWNGLGTSVMEVSHRGKEFIQVAEEAEKDFRDLLNVPSNYKVLFCHGGGRGQFAAVPLNILGDKTTADYVDAGYWAASAIKEAKKYCTPNVFDAKVTVDGLRAVKPMREWQLSDNAAYMHYCPNETIDGIAIDETPDFGADVVVAADFSSTILSRPIDVSRYGVIYAGAQKNIGPAGLTIVIVREDLLGKANIACPSILDYSILNDNGSMFNTPPTFAWYLSGLVFKWLKANGGVAEMDKINQQKAELLYGVIDNSDFYRNDVAKANRSRMNVPFQLADSALDKLFLEESFAAGLHALKGHRVVGGMRASIYNAMPLEGVKALTDFMVEFERRHG</sequence>
<proteinExistence type="evidence at protein level"/>
<accession>P23721</accession>
<accession>P78266</accession>
<comment type="function">
    <text evidence="2 3">Catalyzes the reversible conversion of 3-phosphohydroxypyruvate to phosphoserine and of 3-hydroxy-2-oxo-4-phosphonooxybutanoate to phosphohydroxythreonine. Is involved in both pyridoxine and serine biosynthesis.</text>
</comment>
<comment type="catalytic activity">
    <reaction evidence="3">
        <text>O-phospho-L-serine + 2-oxoglutarate = 3-phosphooxypyruvate + L-glutamate</text>
        <dbReference type="Rhea" id="RHEA:14329"/>
        <dbReference type="ChEBI" id="CHEBI:16810"/>
        <dbReference type="ChEBI" id="CHEBI:18110"/>
        <dbReference type="ChEBI" id="CHEBI:29985"/>
        <dbReference type="ChEBI" id="CHEBI:57524"/>
        <dbReference type="EC" id="2.6.1.52"/>
    </reaction>
</comment>
<comment type="catalytic activity">
    <reaction evidence="3">
        <text>4-(phosphooxy)-L-threonine + 2-oxoglutarate = (R)-3-hydroxy-2-oxo-4-phosphooxybutanoate + L-glutamate</text>
        <dbReference type="Rhea" id="RHEA:16573"/>
        <dbReference type="ChEBI" id="CHEBI:16810"/>
        <dbReference type="ChEBI" id="CHEBI:29985"/>
        <dbReference type="ChEBI" id="CHEBI:58452"/>
        <dbReference type="ChEBI" id="CHEBI:58538"/>
        <dbReference type="EC" id="2.6.1.52"/>
    </reaction>
</comment>
<comment type="cofactor">
    <cofactor evidence="3">
        <name>pyridoxal 5'-phosphate</name>
        <dbReference type="ChEBI" id="CHEBI:597326"/>
    </cofactor>
    <text evidence="3">Binds 1 pyridoxal phosphate per subunit.</text>
</comment>
<comment type="biophysicochemical properties">
    <kinetics>
        <KM evidence="3">15 uM for 3-phosphonooxypyruvate</KM>
        <KM evidence="3">17 uM for O(3)-phospho-L-serine</KM>
        <KM evidence="3">110 uM for 4-phosphonooxy-L-threonine</KM>
        <Vmax evidence="3">45.0 nmol/sec/mg enzyme with 3-phosphonooxypyruvate as substrate</Vmax>
        <Vmax evidence="3">9.9 nmol/sec/mg enzyme with O(3)-phospho-L-serine as substrate</Vmax>
        <Vmax evidence="3">3.8 nmol/sec/mg enzyme with 4-phosphonooxy-L-threonine as substrate</Vmax>
        <text>No activity could be observed with non-phosphorylated substrates.</text>
    </kinetics>
    <phDependence>
        <text evidence="3">Optimum pH is 7.5-8.8.</text>
    </phDependence>
</comment>
<comment type="pathway">
    <text evidence="2">Amino-acid biosynthesis; L-serine biosynthesis; L-serine from 3-phospho-D-glycerate: step 2/3.</text>
</comment>
<comment type="pathway">
    <text evidence="2">Cofactor biosynthesis; pyridoxine 5'-phosphate biosynthesis; pyridoxine 5'-phosphate from D-erythrose 4-phosphate: step 3/5.</text>
</comment>
<comment type="subunit">
    <text evidence="1">Homodimer.</text>
</comment>
<comment type="interaction">
    <interactant intactId="EBI-557952">
        <id>P23721</id>
    </interactant>
    <interactant intactId="EBI-542092">
        <id>P0A6Y8</id>
        <label>dnaK</label>
    </interactant>
    <organismsDiffer>false</organismsDiffer>
    <experiments>2</experiments>
</comment>
<comment type="interaction">
    <interactant intactId="EBI-557952">
        <id>P23721</id>
    </interactant>
    <interactant intactId="EBI-551705">
        <id>P14081</id>
        <label>selB</label>
    </interactant>
    <organismsDiffer>false</organismsDiffer>
    <experiments>3</experiments>
</comment>
<comment type="subcellular location">
    <subcellularLocation>
        <location>Cytoplasm</location>
    </subcellularLocation>
</comment>
<comment type="similarity">
    <text evidence="5">Belongs to the class-V pyridoxal-phosphate-dependent aminotransferase family. SerC subfamily.</text>
</comment>
<protein>
    <recommendedName>
        <fullName>Phosphoserine aminotransferase</fullName>
        <ecNumber>2.6.1.52</ecNumber>
    </recommendedName>
    <alternativeName>
        <fullName>Phosphohydroxythreonine aminotransferase</fullName>
        <shortName>PSAT</shortName>
    </alternativeName>
</protein>
<organism>
    <name type="scientific">Escherichia coli (strain K12)</name>
    <dbReference type="NCBI Taxonomy" id="83333"/>
    <lineage>
        <taxon>Bacteria</taxon>
        <taxon>Pseudomonadati</taxon>
        <taxon>Pseudomonadota</taxon>
        <taxon>Gammaproteobacteria</taxon>
        <taxon>Enterobacterales</taxon>
        <taxon>Enterobacteriaceae</taxon>
        <taxon>Escherichia</taxon>
    </lineage>
</organism>
<reference key="1">
    <citation type="journal article" date="1986" name="Biochem. J.">
        <title>The serC-aro A operon of Escherichia coli. A mixed function operon encoding enzymes from two different amino acid biosynthetic pathways.</title>
        <authorList>
            <person name="Duncan K."/>
            <person name="Coggins J.R."/>
        </authorList>
    </citation>
    <scope>NUCLEOTIDE SEQUENCE [GENOMIC DNA]</scope>
    <source>
        <strain>K12</strain>
    </source>
</reference>
<reference key="2">
    <citation type="journal article" date="1996" name="DNA Res.">
        <title>A 718-kb DNA sequence of the Escherichia coli K-12 genome corresponding to the 12.7-28.0 min region on the linkage map.</title>
        <authorList>
            <person name="Oshima T."/>
            <person name="Aiba H."/>
            <person name="Baba T."/>
            <person name="Fujita K."/>
            <person name="Hayashi K."/>
            <person name="Honjo A."/>
            <person name="Ikemoto K."/>
            <person name="Inada T."/>
            <person name="Itoh T."/>
            <person name="Kajihara M."/>
            <person name="Kanai K."/>
            <person name="Kashimoto K."/>
            <person name="Kimura S."/>
            <person name="Kitagawa M."/>
            <person name="Makino K."/>
            <person name="Masuda S."/>
            <person name="Miki T."/>
            <person name="Mizobuchi K."/>
            <person name="Mori H."/>
            <person name="Motomura K."/>
            <person name="Nakamura Y."/>
            <person name="Nashimoto H."/>
            <person name="Nishio Y."/>
            <person name="Saito N."/>
            <person name="Sampei G."/>
            <person name="Seki Y."/>
            <person name="Tagami H."/>
            <person name="Takemoto K."/>
            <person name="Wada C."/>
            <person name="Yamamoto Y."/>
            <person name="Yano M."/>
            <person name="Horiuchi T."/>
        </authorList>
    </citation>
    <scope>NUCLEOTIDE SEQUENCE [LARGE SCALE GENOMIC DNA]</scope>
    <source>
        <strain>K12 / W3110 / ATCC 27325 / DSM 5911</strain>
    </source>
</reference>
<reference key="3">
    <citation type="journal article" date="1997" name="Science">
        <title>The complete genome sequence of Escherichia coli K-12.</title>
        <authorList>
            <person name="Blattner F.R."/>
            <person name="Plunkett G. III"/>
            <person name="Bloch C.A."/>
            <person name="Perna N.T."/>
            <person name="Burland V."/>
            <person name="Riley M."/>
            <person name="Collado-Vides J."/>
            <person name="Glasner J.D."/>
            <person name="Rode C.K."/>
            <person name="Mayhew G.F."/>
            <person name="Gregor J."/>
            <person name="Davis N.W."/>
            <person name="Kirkpatrick H.A."/>
            <person name="Goeden M.A."/>
            <person name="Rose D.J."/>
            <person name="Mau B."/>
            <person name="Shao Y."/>
        </authorList>
    </citation>
    <scope>NUCLEOTIDE SEQUENCE [LARGE SCALE GENOMIC DNA]</scope>
    <source>
        <strain>K12 / MG1655 / ATCC 47076</strain>
    </source>
</reference>
<reference key="4">
    <citation type="journal article" date="2006" name="Mol. Syst. Biol.">
        <title>Highly accurate genome sequences of Escherichia coli K-12 strains MG1655 and W3110.</title>
        <authorList>
            <person name="Hayashi K."/>
            <person name="Morooka N."/>
            <person name="Yamamoto Y."/>
            <person name="Fujita K."/>
            <person name="Isono K."/>
            <person name="Choi S."/>
            <person name="Ohtsubo E."/>
            <person name="Baba T."/>
            <person name="Wanner B.L."/>
            <person name="Mori H."/>
            <person name="Horiuchi T."/>
        </authorList>
    </citation>
    <scope>NUCLEOTIDE SEQUENCE [LARGE SCALE GENOMIC DNA]</scope>
    <source>
        <strain>K12 / W3110 / ATCC 27325 / DSM 5911</strain>
    </source>
</reference>
<reference key="5">
    <citation type="journal article" date="1997" name="Electrophoresis">
        <title>Comparing the predicted and observed properties of proteins encoded in the genome of Escherichia coli K-12.</title>
        <authorList>
            <person name="Link A.J."/>
            <person name="Robison K."/>
            <person name="Church G.M."/>
        </authorList>
    </citation>
    <scope>PROTEIN SEQUENCE OF 2-13</scope>
    <source>
        <strain>K12 / EMG2</strain>
    </source>
</reference>
<reference key="6">
    <citation type="journal article" date="1989" name="Nucleic Acids Res.">
        <title>Extensive homology between the Escherichia coli K-12 SerC(PdxF) aminotransferase and a protein encoded by a progesterone-induced mRNA in rabbit and human endometria.</title>
        <authorList>
            <person name="van der Zel A."/>
            <person name="Lam H.-M."/>
            <person name="Winkler M.E."/>
        </authorList>
    </citation>
    <scope>SIMILARITY TO RABBIT EPIP</scope>
</reference>
<reference key="7">
    <citation type="journal article" date="1990" name="J. Bacteriol.">
        <title>Metabolic relationships between pyridoxine (vitamin B6) and serine biosynthesis in Escherichia coli K-12.</title>
        <authorList>
            <person name="Lam H.-M."/>
            <person name="Winkler M.E."/>
        </authorList>
    </citation>
    <scope>FUNCTION</scope>
    <scope>PATHWAY</scope>
    <source>
        <strain>K12</strain>
    </source>
</reference>
<reference key="8">
    <citation type="journal article" date="1996" name="FEBS Lett.">
        <title>4-O-phosphoryl-L-threonine, a substrate of the pdxC(serC) gene product involved in vitamin B6 biosynthesis.</title>
        <authorList>
            <person name="Drewke C."/>
            <person name="Klein M."/>
            <person name="Clade D."/>
            <person name="Arenz A."/>
            <person name="Mueller R."/>
            <person name="Leistner E."/>
        </authorList>
    </citation>
    <scope>FUNCTION</scope>
    <scope>CATALYTIC ACTIVITY</scope>
    <scope>BIOPHYSICOCHEMICAL PROPERTIES</scope>
    <scope>COFACTOR</scope>
</reference>
<reference key="9">
    <citation type="journal article" date="1999" name="J. Mol. Biol.">
        <title>Crystal structure of phosphoserine aminotransferase from Escherichia coli at 2.3-A resolution: comparison of the unligated enzyme and a complex with alpha-methyl-L-glutamate.</title>
        <authorList>
            <person name="Hester G."/>
            <person name="Stark W."/>
            <person name="Moser M."/>
            <person name="Kallen J."/>
            <person name="Markovic-Housley Z."/>
            <person name="Jansonius J.N."/>
        </authorList>
    </citation>
    <scope>X-RAY CRYSTALLOGRAPHY (2.3 ANGSTROMS) OF 3-362 IN COMPLEX WITH PLP AND SUBSTRATE ANALOG</scope>
    <scope>SUBUNIT</scope>
    <scope>CATALYTIC MECHANISM</scope>
    <scope>PYRIDOXAL PHOSPHATE AT LYS-198</scope>
</reference>
<evidence type="ECO:0000269" key="1">
    <source>
    </source>
</evidence>
<evidence type="ECO:0000269" key="2">
    <source>
    </source>
</evidence>
<evidence type="ECO:0000269" key="3">
    <source>
    </source>
</evidence>
<evidence type="ECO:0000269" key="4">
    <source>
    </source>
</evidence>
<evidence type="ECO:0000305" key="5"/>
<evidence type="ECO:0007829" key="6">
    <source>
        <dbReference type="PDB" id="1BJN"/>
    </source>
</evidence>
<evidence type="ECO:0007829" key="7">
    <source>
        <dbReference type="PDB" id="1BJO"/>
    </source>
</evidence>
<keyword id="KW-0002">3D-structure</keyword>
<keyword id="KW-0028">Amino-acid biosynthesis</keyword>
<keyword id="KW-0032">Aminotransferase</keyword>
<keyword id="KW-0963">Cytoplasm</keyword>
<keyword id="KW-0903">Direct protein sequencing</keyword>
<keyword id="KW-0663">Pyridoxal phosphate</keyword>
<keyword id="KW-0664">Pyridoxine biosynthesis</keyword>
<keyword id="KW-1185">Reference proteome</keyword>
<keyword id="KW-0718">Serine biosynthesis</keyword>
<keyword id="KW-0808">Transferase</keyword>
<feature type="initiator methionine" description="Removed" evidence="4">
    <location>
        <position position="1"/>
    </location>
</feature>
<feature type="chain" id="PRO_0000150167" description="Phosphoserine aminotransferase">
    <location>
        <begin position="2"/>
        <end position="362"/>
    </location>
</feature>
<feature type="binding site">
    <location>
        <position position="9"/>
    </location>
    <ligand>
        <name>L-glutamate</name>
        <dbReference type="ChEBI" id="CHEBI:29985"/>
    </ligand>
</feature>
<feature type="binding site">
    <location>
        <position position="42"/>
    </location>
    <ligand>
        <name>L-glutamate</name>
        <dbReference type="ChEBI" id="CHEBI:29985"/>
    </ligand>
</feature>
<feature type="binding site">
    <location>
        <begin position="76"/>
        <end position="77"/>
    </location>
    <ligand>
        <name>pyridoxal 5'-phosphate</name>
        <dbReference type="ChEBI" id="CHEBI:597326"/>
    </ligand>
</feature>
<feature type="binding site">
    <location>
        <position position="102"/>
    </location>
    <ligand>
        <name>pyridoxal 5'-phosphate</name>
        <dbReference type="ChEBI" id="CHEBI:597326"/>
    </ligand>
</feature>
<feature type="binding site">
    <location>
        <position position="153"/>
    </location>
    <ligand>
        <name>pyridoxal 5'-phosphate</name>
        <dbReference type="ChEBI" id="CHEBI:597326"/>
    </ligand>
</feature>
<feature type="binding site">
    <location>
        <position position="174"/>
    </location>
    <ligand>
        <name>pyridoxal 5'-phosphate</name>
        <dbReference type="ChEBI" id="CHEBI:597326"/>
    </ligand>
</feature>
<feature type="binding site">
    <location>
        <position position="197"/>
    </location>
    <ligand>
        <name>pyridoxal 5'-phosphate</name>
        <dbReference type="ChEBI" id="CHEBI:597326"/>
    </ligand>
</feature>
<feature type="binding site">
    <location>
        <begin position="239"/>
        <end position="240"/>
    </location>
    <ligand>
        <name>pyridoxal 5'-phosphate</name>
        <dbReference type="ChEBI" id="CHEBI:597326"/>
    </ligand>
</feature>
<feature type="modified residue" description="N6-(pyridoxal phosphate)lysine">
    <location>
        <position position="198"/>
    </location>
</feature>
<feature type="sequence conflict" description="In Ref. 1; no nucleotide entry." evidence="5" ref="1">
    <original>A</original>
    <variation>R</variation>
    <location>
        <position position="293"/>
    </location>
</feature>
<feature type="strand" evidence="6">
    <location>
        <begin position="9"/>
        <end position="11"/>
    </location>
</feature>
<feature type="helix" evidence="6">
    <location>
        <begin position="16"/>
        <end position="24"/>
    </location>
</feature>
<feature type="strand" evidence="6">
    <location>
        <begin position="26"/>
        <end position="28"/>
    </location>
</feature>
<feature type="helix" evidence="6">
    <location>
        <begin position="29"/>
        <end position="31"/>
    </location>
</feature>
<feature type="strand" evidence="6">
    <location>
        <begin position="32"/>
        <end position="34"/>
    </location>
</feature>
<feature type="helix" evidence="6">
    <location>
        <begin position="36"/>
        <end position="38"/>
    </location>
</feature>
<feature type="helix" evidence="6">
    <location>
        <begin position="44"/>
        <end position="61"/>
    </location>
</feature>
<feature type="strand" evidence="6">
    <location>
        <begin position="67"/>
        <end position="74"/>
    </location>
</feature>
<feature type="helix" evidence="6">
    <location>
        <begin position="75"/>
        <end position="87"/>
    </location>
</feature>
<feature type="strand" evidence="6">
    <location>
        <begin position="93"/>
        <end position="100"/>
    </location>
</feature>
<feature type="helix" evidence="6">
    <location>
        <begin position="101"/>
        <end position="110"/>
    </location>
</feature>
<feature type="turn" evidence="6">
    <location>
        <begin position="111"/>
        <end position="113"/>
    </location>
</feature>
<feature type="strand" evidence="6">
    <location>
        <begin position="114"/>
        <end position="120"/>
    </location>
</feature>
<feature type="strand" evidence="6">
    <location>
        <begin position="122"/>
        <end position="125"/>
    </location>
</feature>
<feature type="strand" evidence="6">
    <location>
        <begin position="128"/>
        <end position="131"/>
    </location>
</feature>
<feature type="helix" evidence="6">
    <location>
        <begin position="134"/>
        <end position="136"/>
    </location>
</feature>
<feature type="strand" evidence="6">
    <location>
        <begin position="146"/>
        <end position="148"/>
    </location>
</feature>
<feature type="strand" evidence="6">
    <location>
        <begin position="150"/>
        <end position="152"/>
    </location>
</feature>
<feature type="turn" evidence="6">
    <location>
        <begin position="153"/>
        <end position="156"/>
    </location>
</feature>
<feature type="strand" evidence="6">
    <location>
        <begin position="171"/>
        <end position="174"/>
    </location>
</feature>
<feature type="turn" evidence="6">
    <location>
        <begin position="176"/>
        <end position="180"/>
    </location>
</feature>
<feature type="helix" evidence="6">
    <location>
        <begin position="186"/>
        <end position="188"/>
    </location>
</feature>
<feature type="strand" evidence="6">
    <location>
        <begin position="190"/>
        <end position="195"/>
    </location>
</feature>
<feature type="turn" evidence="7">
    <location>
        <begin position="196"/>
        <end position="199"/>
    </location>
</feature>
<feature type="strand" evidence="6">
    <location>
        <begin position="206"/>
        <end position="211"/>
    </location>
</feature>
<feature type="helix" evidence="6">
    <location>
        <begin position="212"/>
        <end position="214"/>
    </location>
</feature>
<feature type="helix" evidence="6">
    <location>
        <begin position="224"/>
        <end position="226"/>
    </location>
</feature>
<feature type="helix" evidence="6">
    <location>
        <begin position="228"/>
        <end position="233"/>
    </location>
</feature>
<feature type="turn" evidence="6">
    <location>
        <begin position="234"/>
        <end position="236"/>
    </location>
</feature>
<feature type="helix" evidence="6">
    <location>
        <begin position="243"/>
        <end position="258"/>
    </location>
</feature>
<feature type="helix" evidence="6">
    <location>
        <begin position="261"/>
        <end position="282"/>
    </location>
</feature>
<feature type="strand" evidence="6">
    <location>
        <begin position="284"/>
        <end position="287"/>
    </location>
</feature>
<feature type="helix" evidence="6">
    <location>
        <begin position="292"/>
        <end position="294"/>
    </location>
</feature>
<feature type="strand" evidence="6">
    <location>
        <begin position="297"/>
        <end position="306"/>
    </location>
</feature>
<feature type="helix" evidence="6">
    <location>
        <begin position="307"/>
        <end position="309"/>
    </location>
</feature>
<feature type="helix" evidence="6">
    <location>
        <begin position="310"/>
        <end position="319"/>
    </location>
</feature>
<feature type="turn" evidence="6">
    <location>
        <begin position="329"/>
        <end position="331"/>
    </location>
</feature>
<feature type="strand" evidence="6">
    <location>
        <begin position="333"/>
        <end position="337"/>
    </location>
</feature>
<feature type="helix" evidence="6">
    <location>
        <begin position="344"/>
        <end position="361"/>
    </location>
</feature>
<dbReference type="EC" id="2.6.1.52"/>
<dbReference type="EMBL" id="U00096">
    <property type="protein sequence ID" value="AAC73993.1"/>
    <property type="molecule type" value="Genomic_DNA"/>
</dbReference>
<dbReference type="EMBL" id="AP009048">
    <property type="protein sequence ID" value="BAA35642.1"/>
    <property type="molecule type" value="Genomic_DNA"/>
</dbReference>
<dbReference type="PIR" id="B64830">
    <property type="entry name" value="B64830"/>
</dbReference>
<dbReference type="RefSeq" id="NP_415427.1">
    <property type="nucleotide sequence ID" value="NC_000913.3"/>
</dbReference>
<dbReference type="RefSeq" id="WP_000057138.1">
    <property type="nucleotide sequence ID" value="NZ_SSZK01000002.1"/>
</dbReference>
<dbReference type="PDB" id="1BJN">
    <property type="method" value="X-ray"/>
    <property type="resolution" value="2.30 A"/>
    <property type="chains" value="A/B=3-362"/>
</dbReference>
<dbReference type="PDB" id="1BJO">
    <property type="method" value="X-ray"/>
    <property type="resolution" value="2.80 A"/>
    <property type="chains" value="A/B=3-362"/>
</dbReference>
<dbReference type="PDBsum" id="1BJN"/>
<dbReference type="PDBsum" id="1BJO"/>
<dbReference type="SMR" id="P23721"/>
<dbReference type="BioGRID" id="4260006">
    <property type="interactions" value="38"/>
</dbReference>
<dbReference type="DIP" id="DIP-2896N"/>
<dbReference type="FunCoup" id="P23721">
    <property type="interactions" value="773"/>
</dbReference>
<dbReference type="IntAct" id="P23721">
    <property type="interactions" value="9"/>
</dbReference>
<dbReference type="STRING" id="511145.b0907"/>
<dbReference type="jPOST" id="P23721"/>
<dbReference type="PaxDb" id="511145-b0907"/>
<dbReference type="EnsemblBacteria" id="AAC73993">
    <property type="protein sequence ID" value="AAC73993"/>
    <property type="gene ID" value="b0907"/>
</dbReference>
<dbReference type="GeneID" id="945527"/>
<dbReference type="KEGG" id="ecj:JW0890"/>
<dbReference type="KEGG" id="eco:b0907"/>
<dbReference type="KEGG" id="ecoc:C3026_05595"/>
<dbReference type="PATRIC" id="fig|1411691.4.peg.1369"/>
<dbReference type="EchoBASE" id="EB0939"/>
<dbReference type="eggNOG" id="COG1932">
    <property type="taxonomic scope" value="Bacteria"/>
</dbReference>
<dbReference type="HOGENOM" id="CLU_034866_0_2_6"/>
<dbReference type="InParanoid" id="P23721"/>
<dbReference type="OMA" id="AFVYFCD"/>
<dbReference type="OrthoDB" id="9809412at2"/>
<dbReference type="PhylomeDB" id="P23721"/>
<dbReference type="BioCyc" id="EcoCyc:PSERTRANSAM-MONOMER"/>
<dbReference type="BioCyc" id="MetaCyc:PSERTRANSAM-MONOMER"/>
<dbReference type="BRENDA" id="2.6.1.52">
    <property type="organism ID" value="2026"/>
</dbReference>
<dbReference type="SABIO-RK" id="P23721"/>
<dbReference type="UniPathway" id="UPA00135">
    <property type="reaction ID" value="UER00197"/>
</dbReference>
<dbReference type="UniPathway" id="UPA00244">
    <property type="reaction ID" value="UER00311"/>
</dbReference>
<dbReference type="EvolutionaryTrace" id="P23721"/>
<dbReference type="PRO" id="PR:P23721"/>
<dbReference type="Proteomes" id="UP000000625">
    <property type="component" value="Chromosome"/>
</dbReference>
<dbReference type="GO" id="GO:0005737">
    <property type="term" value="C:cytoplasm"/>
    <property type="evidence" value="ECO:0000318"/>
    <property type="project" value="GO_Central"/>
</dbReference>
<dbReference type="GO" id="GO:0005829">
    <property type="term" value="C:cytosol"/>
    <property type="evidence" value="ECO:0000314"/>
    <property type="project" value="EcoCyc"/>
</dbReference>
<dbReference type="GO" id="GO:0004648">
    <property type="term" value="F:O-phospho-L-serine:2-oxoglutarate aminotransferase activity"/>
    <property type="evidence" value="ECO:0000314"/>
    <property type="project" value="EcoCyc"/>
</dbReference>
<dbReference type="GO" id="GO:0042803">
    <property type="term" value="F:protein homodimerization activity"/>
    <property type="evidence" value="ECO:0000314"/>
    <property type="project" value="EcoCyc"/>
</dbReference>
<dbReference type="GO" id="GO:0030170">
    <property type="term" value="F:pyridoxal phosphate binding"/>
    <property type="evidence" value="ECO:0000314"/>
    <property type="project" value="EcoCyc"/>
</dbReference>
<dbReference type="GO" id="GO:0006564">
    <property type="term" value="P:L-serine biosynthetic process"/>
    <property type="evidence" value="ECO:0000315"/>
    <property type="project" value="EcoCyc"/>
</dbReference>
<dbReference type="GO" id="GO:0006563">
    <property type="term" value="P:L-serine metabolic process"/>
    <property type="evidence" value="ECO:0000316"/>
    <property type="project" value="UniProtKB"/>
</dbReference>
<dbReference type="GO" id="GO:0033359">
    <property type="term" value="P:lysine biosynthetic process via diaminopimelate and N-succinyl-2-amino-6-ketopimelate"/>
    <property type="evidence" value="ECO:0000316"/>
    <property type="project" value="EcoCyc"/>
</dbReference>
<dbReference type="GO" id="GO:0042823">
    <property type="term" value="P:pyridoxal phosphate biosynthetic process"/>
    <property type="evidence" value="ECO:0000315"/>
    <property type="project" value="EcoCyc"/>
</dbReference>
<dbReference type="GO" id="GO:0008615">
    <property type="term" value="P:pyridoxine biosynthetic process"/>
    <property type="evidence" value="ECO:0007669"/>
    <property type="project" value="UniProtKB-UniRule"/>
</dbReference>
<dbReference type="CDD" id="cd00611">
    <property type="entry name" value="PSAT_like"/>
    <property type="match status" value="1"/>
</dbReference>
<dbReference type="FunFam" id="3.40.640.10:FF:000010">
    <property type="entry name" value="Phosphoserine aminotransferase"/>
    <property type="match status" value="1"/>
</dbReference>
<dbReference type="FunFam" id="3.90.1150.10:FF:000006">
    <property type="entry name" value="Phosphoserine aminotransferase"/>
    <property type="match status" value="1"/>
</dbReference>
<dbReference type="Gene3D" id="3.90.1150.10">
    <property type="entry name" value="Aspartate Aminotransferase, domain 1"/>
    <property type="match status" value="1"/>
</dbReference>
<dbReference type="Gene3D" id="3.40.640.10">
    <property type="entry name" value="Type I PLP-dependent aspartate aminotransferase-like (Major domain)"/>
    <property type="match status" value="1"/>
</dbReference>
<dbReference type="HAMAP" id="MF_00160">
    <property type="entry name" value="SerC_aminotrans_5"/>
    <property type="match status" value="1"/>
</dbReference>
<dbReference type="InterPro" id="IPR000192">
    <property type="entry name" value="Aminotrans_V_dom"/>
</dbReference>
<dbReference type="InterPro" id="IPR020578">
    <property type="entry name" value="Aminotrans_V_PyrdxlP_BS"/>
</dbReference>
<dbReference type="InterPro" id="IPR022278">
    <property type="entry name" value="Pser_aminoTfrase"/>
</dbReference>
<dbReference type="InterPro" id="IPR015424">
    <property type="entry name" value="PyrdxlP-dep_Trfase"/>
</dbReference>
<dbReference type="InterPro" id="IPR015421">
    <property type="entry name" value="PyrdxlP-dep_Trfase_major"/>
</dbReference>
<dbReference type="InterPro" id="IPR015422">
    <property type="entry name" value="PyrdxlP-dep_Trfase_small"/>
</dbReference>
<dbReference type="NCBIfam" id="NF003764">
    <property type="entry name" value="PRK05355.1"/>
    <property type="match status" value="1"/>
</dbReference>
<dbReference type="NCBIfam" id="TIGR01364">
    <property type="entry name" value="serC_1"/>
    <property type="match status" value="1"/>
</dbReference>
<dbReference type="PANTHER" id="PTHR43247">
    <property type="entry name" value="PHOSPHOSERINE AMINOTRANSFERASE"/>
    <property type="match status" value="1"/>
</dbReference>
<dbReference type="PANTHER" id="PTHR43247:SF1">
    <property type="entry name" value="PHOSPHOSERINE AMINOTRANSFERASE"/>
    <property type="match status" value="1"/>
</dbReference>
<dbReference type="Pfam" id="PF00266">
    <property type="entry name" value="Aminotran_5"/>
    <property type="match status" value="1"/>
</dbReference>
<dbReference type="PIRSF" id="PIRSF000525">
    <property type="entry name" value="SerC"/>
    <property type="match status" value="1"/>
</dbReference>
<dbReference type="SUPFAM" id="SSF53383">
    <property type="entry name" value="PLP-dependent transferases"/>
    <property type="match status" value="1"/>
</dbReference>
<dbReference type="PROSITE" id="PS00595">
    <property type="entry name" value="AA_TRANSFER_CLASS_5"/>
    <property type="match status" value="1"/>
</dbReference>
<name>SERC_ECOLI</name>